<gene>
    <name evidence="1" type="primary">hutU</name>
    <name type="ordered locus">Bcav_1838</name>
</gene>
<protein>
    <recommendedName>
        <fullName evidence="1">Urocanate hydratase</fullName>
        <shortName evidence="1">Urocanase</shortName>
        <ecNumber evidence="1">4.2.1.49</ecNumber>
    </recommendedName>
    <alternativeName>
        <fullName evidence="1">Imidazolonepropionate hydrolase</fullName>
    </alternativeName>
</protein>
<comment type="function">
    <text evidence="1">Catalyzes the conversion of urocanate to 4-imidazolone-5-propionate.</text>
</comment>
<comment type="catalytic activity">
    <reaction evidence="1">
        <text>4-imidazolone-5-propanoate = trans-urocanate + H2O</text>
        <dbReference type="Rhea" id="RHEA:13101"/>
        <dbReference type="ChEBI" id="CHEBI:15377"/>
        <dbReference type="ChEBI" id="CHEBI:17771"/>
        <dbReference type="ChEBI" id="CHEBI:77893"/>
        <dbReference type="EC" id="4.2.1.49"/>
    </reaction>
</comment>
<comment type="cofactor">
    <cofactor evidence="1">
        <name>NAD(+)</name>
        <dbReference type="ChEBI" id="CHEBI:57540"/>
    </cofactor>
    <text evidence="1">Binds 1 NAD(+) per subunit.</text>
</comment>
<comment type="pathway">
    <text evidence="1">Amino-acid degradation; L-histidine degradation into L-glutamate; N-formimidoyl-L-glutamate from L-histidine: step 2/3.</text>
</comment>
<comment type="subcellular location">
    <subcellularLocation>
        <location evidence="1">Cytoplasm</location>
    </subcellularLocation>
</comment>
<comment type="similarity">
    <text evidence="1">Belongs to the urocanase family.</text>
</comment>
<accession>C5C4W6</accession>
<organism>
    <name type="scientific">Beutenbergia cavernae (strain ATCC BAA-8 / DSM 12333 / CCUG 43141 / JCM 11478 / NBRC 16432 / NCIMB 13614 / HKI 0122)</name>
    <dbReference type="NCBI Taxonomy" id="471853"/>
    <lineage>
        <taxon>Bacteria</taxon>
        <taxon>Bacillati</taxon>
        <taxon>Actinomycetota</taxon>
        <taxon>Actinomycetes</taxon>
        <taxon>Micrococcales</taxon>
        <taxon>Beutenbergiaceae</taxon>
        <taxon>Beutenbergia</taxon>
    </lineage>
</organism>
<evidence type="ECO:0000255" key="1">
    <source>
        <dbReference type="HAMAP-Rule" id="MF_00577"/>
    </source>
</evidence>
<name>HUTU_BEUC1</name>
<dbReference type="EC" id="4.2.1.49" evidence="1"/>
<dbReference type="EMBL" id="CP001618">
    <property type="protein sequence ID" value="ACQ80094.1"/>
    <property type="molecule type" value="Genomic_DNA"/>
</dbReference>
<dbReference type="RefSeq" id="WP_015882334.1">
    <property type="nucleotide sequence ID" value="NC_012669.1"/>
</dbReference>
<dbReference type="SMR" id="C5C4W6"/>
<dbReference type="STRING" id="471853.Bcav_1838"/>
<dbReference type="KEGG" id="bcv:Bcav_1838"/>
<dbReference type="eggNOG" id="COG2987">
    <property type="taxonomic scope" value="Bacteria"/>
</dbReference>
<dbReference type="HOGENOM" id="CLU_018868_0_1_11"/>
<dbReference type="OrthoDB" id="9764874at2"/>
<dbReference type="UniPathway" id="UPA00379">
    <property type="reaction ID" value="UER00550"/>
</dbReference>
<dbReference type="Proteomes" id="UP000007962">
    <property type="component" value="Chromosome"/>
</dbReference>
<dbReference type="GO" id="GO:0005737">
    <property type="term" value="C:cytoplasm"/>
    <property type="evidence" value="ECO:0007669"/>
    <property type="project" value="UniProtKB-SubCell"/>
</dbReference>
<dbReference type="GO" id="GO:0016153">
    <property type="term" value="F:urocanate hydratase activity"/>
    <property type="evidence" value="ECO:0007669"/>
    <property type="project" value="UniProtKB-UniRule"/>
</dbReference>
<dbReference type="GO" id="GO:0019556">
    <property type="term" value="P:L-histidine catabolic process to glutamate and formamide"/>
    <property type="evidence" value="ECO:0007669"/>
    <property type="project" value="UniProtKB-UniPathway"/>
</dbReference>
<dbReference type="GO" id="GO:0019557">
    <property type="term" value="P:L-histidine catabolic process to glutamate and formate"/>
    <property type="evidence" value="ECO:0007669"/>
    <property type="project" value="UniProtKB-UniPathway"/>
</dbReference>
<dbReference type="FunFam" id="3.40.50.10730:FF:000001">
    <property type="entry name" value="Urocanate hydratase"/>
    <property type="match status" value="1"/>
</dbReference>
<dbReference type="Gene3D" id="3.40.50.10730">
    <property type="entry name" value="Urocanase like domains"/>
    <property type="match status" value="1"/>
</dbReference>
<dbReference type="Gene3D" id="3.40.1770.10">
    <property type="entry name" value="Urocanase superfamily"/>
    <property type="match status" value="1"/>
</dbReference>
<dbReference type="HAMAP" id="MF_00577">
    <property type="entry name" value="HutU"/>
    <property type="match status" value="1"/>
</dbReference>
<dbReference type="InterPro" id="IPR055351">
    <property type="entry name" value="Urocanase"/>
</dbReference>
<dbReference type="InterPro" id="IPR023637">
    <property type="entry name" value="Urocanase-like"/>
</dbReference>
<dbReference type="InterPro" id="IPR035401">
    <property type="entry name" value="Urocanase_C"/>
</dbReference>
<dbReference type="InterPro" id="IPR038364">
    <property type="entry name" value="Urocanase_central_sf"/>
</dbReference>
<dbReference type="InterPro" id="IPR023636">
    <property type="entry name" value="Urocanase_CS"/>
</dbReference>
<dbReference type="InterPro" id="IPR035400">
    <property type="entry name" value="Urocanase_N"/>
</dbReference>
<dbReference type="InterPro" id="IPR035085">
    <property type="entry name" value="Urocanase_Rossmann-like"/>
</dbReference>
<dbReference type="InterPro" id="IPR036190">
    <property type="entry name" value="Urocanase_sf"/>
</dbReference>
<dbReference type="NCBIfam" id="TIGR01228">
    <property type="entry name" value="hutU"/>
    <property type="match status" value="1"/>
</dbReference>
<dbReference type="NCBIfam" id="NF003820">
    <property type="entry name" value="PRK05414.1"/>
    <property type="match status" value="1"/>
</dbReference>
<dbReference type="PANTHER" id="PTHR12216">
    <property type="entry name" value="UROCANATE HYDRATASE"/>
    <property type="match status" value="1"/>
</dbReference>
<dbReference type="PANTHER" id="PTHR12216:SF4">
    <property type="entry name" value="UROCANATE HYDRATASE"/>
    <property type="match status" value="1"/>
</dbReference>
<dbReference type="Pfam" id="PF01175">
    <property type="entry name" value="Urocanase"/>
    <property type="match status" value="1"/>
</dbReference>
<dbReference type="Pfam" id="PF17392">
    <property type="entry name" value="Urocanase_C"/>
    <property type="match status" value="1"/>
</dbReference>
<dbReference type="Pfam" id="PF17391">
    <property type="entry name" value="Urocanase_N"/>
    <property type="match status" value="1"/>
</dbReference>
<dbReference type="PIRSF" id="PIRSF001423">
    <property type="entry name" value="Urocanate_hydrat"/>
    <property type="match status" value="1"/>
</dbReference>
<dbReference type="SUPFAM" id="SSF111326">
    <property type="entry name" value="Urocanase"/>
    <property type="match status" value="1"/>
</dbReference>
<dbReference type="PROSITE" id="PS01233">
    <property type="entry name" value="UROCANASE"/>
    <property type="match status" value="1"/>
</dbReference>
<feature type="chain" id="PRO_1000212099" description="Urocanate hydratase">
    <location>
        <begin position="1"/>
        <end position="557"/>
    </location>
</feature>
<feature type="active site" evidence="1">
    <location>
        <position position="411"/>
    </location>
</feature>
<feature type="binding site" evidence="1">
    <location>
        <begin position="48"/>
        <end position="49"/>
    </location>
    <ligand>
        <name>NAD(+)</name>
        <dbReference type="ChEBI" id="CHEBI:57540"/>
    </ligand>
</feature>
<feature type="binding site" evidence="1">
    <location>
        <position position="126"/>
    </location>
    <ligand>
        <name>NAD(+)</name>
        <dbReference type="ChEBI" id="CHEBI:57540"/>
    </ligand>
</feature>
<feature type="binding site" evidence="1">
    <location>
        <begin position="178"/>
        <end position="180"/>
    </location>
    <ligand>
        <name>NAD(+)</name>
        <dbReference type="ChEBI" id="CHEBI:57540"/>
    </ligand>
</feature>
<feature type="binding site" evidence="1">
    <location>
        <position position="198"/>
    </location>
    <ligand>
        <name>NAD(+)</name>
        <dbReference type="ChEBI" id="CHEBI:57540"/>
    </ligand>
</feature>
<feature type="binding site" evidence="1">
    <location>
        <position position="203"/>
    </location>
    <ligand>
        <name>NAD(+)</name>
        <dbReference type="ChEBI" id="CHEBI:57540"/>
    </ligand>
</feature>
<feature type="binding site" evidence="1">
    <location>
        <begin position="244"/>
        <end position="245"/>
    </location>
    <ligand>
        <name>NAD(+)</name>
        <dbReference type="ChEBI" id="CHEBI:57540"/>
    </ligand>
</feature>
<feature type="binding site" evidence="1">
    <location>
        <begin position="265"/>
        <end position="269"/>
    </location>
    <ligand>
        <name>NAD(+)</name>
        <dbReference type="ChEBI" id="CHEBI:57540"/>
    </ligand>
</feature>
<feature type="binding site" evidence="1">
    <location>
        <begin position="274"/>
        <end position="275"/>
    </location>
    <ligand>
        <name>NAD(+)</name>
        <dbReference type="ChEBI" id="CHEBI:57540"/>
    </ligand>
</feature>
<feature type="binding site" evidence="1">
    <location>
        <position position="323"/>
    </location>
    <ligand>
        <name>NAD(+)</name>
        <dbReference type="ChEBI" id="CHEBI:57540"/>
    </ligand>
</feature>
<feature type="binding site" evidence="1">
    <location>
        <position position="493"/>
    </location>
    <ligand>
        <name>NAD(+)</name>
        <dbReference type="ChEBI" id="CHEBI:57540"/>
    </ligand>
</feature>
<sequence>MDGAREVRSPRGSTLTARSWQTEAPLRMLMNNLDPDVAERPDDLVVYGGTGRAARDWASYDGIVRTLTTLGDDETLLVQSGRPVGVLRTHEWAPRVLIANSNLVPDWATWPEFRRLEHLGLTMYGQMTAGSWIYIGTQGILQGTYETFAAVAEKVGRPDDDGVASLAGTLTLTAGCGGMGGAQPLAVTLNGGVCLVVDVDPERLRRRVATRYLDEVADGLDDAVARCEAAKLERRALSVGLVGNAATVYPELLRRGVEIDVVTDQTSAHDPLSYLPEGVELGEWHEAAEAKPEEFTDRARESMARQVAAMVGFLDAGAEVFDYGNSIRDEARQGGYDRAFAFPGFVPAYIRPLFSEGKGPFRWAALSGDPADIAATDRAVLDLFPDDAKLHRWIRAAGERVAYQGLPARICWLGYGERHLAGLRFNEMVASGELSAPIVIGRDHLDAGSVASPYRETEAMADGSDAIADWPLLNALVNTASGATWVSIHHGGGVGIGRSIHAGQVSVADGTELAAAKLERVLTNDPGMGVIRHVDAGYARADEVAAERGVRVPMRES</sequence>
<proteinExistence type="inferred from homology"/>
<reference key="1">
    <citation type="journal article" date="2009" name="Stand. Genomic Sci.">
        <title>Complete genome sequence of Beutenbergia cavernae type strain (HKI 0122).</title>
        <authorList>
            <person name="Land M."/>
            <person name="Pukall R."/>
            <person name="Abt B."/>
            <person name="Goker M."/>
            <person name="Rohde M."/>
            <person name="Glavina Del Rio T."/>
            <person name="Tice H."/>
            <person name="Copeland A."/>
            <person name="Cheng J.F."/>
            <person name="Lucas S."/>
            <person name="Chen F."/>
            <person name="Nolan M."/>
            <person name="Bruce D."/>
            <person name="Goodwin L."/>
            <person name="Pitluck S."/>
            <person name="Ivanova N."/>
            <person name="Mavromatis K."/>
            <person name="Ovchinnikova G."/>
            <person name="Pati A."/>
            <person name="Chen A."/>
            <person name="Palaniappan K."/>
            <person name="Hauser L."/>
            <person name="Chang Y.J."/>
            <person name="Jefferies C.C."/>
            <person name="Saunders E."/>
            <person name="Brettin T."/>
            <person name="Detter J.C."/>
            <person name="Han C."/>
            <person name="Chain P."/>
            <person name="Bristow J."/>
            <person name="Eisen J.A."/>
            <person name="Markowitz V."/>
            <person name="Hugenholtz P."/>
            <person name="Kyrpides N.C."/>
            <person name="Klenk H.P."/>
            <person name="Lapidus A."/>
        </authorList>
    </citation>
    <scope>NUCLEOTIDE SEQUENCE [LARGE SCALE GENOMIC DNA]</scope>
    <source>
        <strain>ATCC BAA-8 / DSM 12333 / CCUG 43141 / JCM 11478 / NBRC 16432 / NCIMB 13614 / HKI 0122</strain>
    </source>
</reference>
<keyword id="KW-0963">Cytoplasm</keyword>
<keyword id="KW-0369">Histidine metabolism</keyword>
<keyword id="KW-0456">Lyase</keyword>
<keyword id="KW-0520">NAD</keyword>
<keyword id="KW-1185">Reference proteome</keyword>